<proteinExistence type="evidence at protein level"/>
<reference key="1">
    <citation type="journal article" date="2014" name="BMC Microbiol.">
        <title>The oxygen-independent metabolism of cyclic monoterpenes in Castellaniella defragrans 65Phen.</title>
        <authorList>
            <person name="Petasch J."/>
            <person name="Disch E.M."/>
            <person name="Markert S."/>
            <person name="Becher D."/>
            <person name="Schweder T."/>
            <person name="Huttel B."/>
            <person name="Reinhardt R."/>
            <person name="Harder J."/>
        </authorList>
    </citation>
    <scope>NUCLEOTIDE SEQUENCE [LARGE SCALE GENOMIC DNA]</scope>
    <scope>IDENTIFICATION BY MASS SPECTROMETRY</scope>
    <scope>FUNCTION</scope>
    <scope>PATHWAY</scope>
    <scope>INDUCTION</scope>
    <scope>DISRUPTION PHENOTYPE</scope>
    <source>
        <strain>DSM 12143 / CCUG 39792 / 65Phen</strain>
    </source>
</reference>
<evidence type="ECO:0000255" key="1">
    <source>
        <dbReference type="PROSITE-ProRule" id="PRU00465"/>
    </source>
</evidence>
<evidence type="ECO:0000269" key="2">
    <source>
    </source>
</evidence>
<evidence type="ECO:0000303" key="3">
    <source>
    </source>
</evidence>
<evidence type="ECO:0000305" key="4"/>
<evidence type="ECO:0000305" key="5">
    <source>
    </source>
</evidence>
<evidence type="ECO:0000312" key="6">
    <source>
        <dbReference type="EMBL" id="CDM25286.1"/>
    </source>
</evidence>
<sequence length="107" mass="11467">MMVKVTYVDSANVSRTIEVAPGVSVMAAARSNDIPEIESDCGGVCTCAACHVYVDPDWVDKTGTASKVENGLLSLQETRRPNSRLSCQITLSEALDGLVIHTLEPEE</sequence>
<accession>W8X5L3</accession>
<feature type="chain" id="PRO_0000459107" description="2Fe-2S ferredoxin CtmE">
    <location>
        <begin position="1"/>
        <end position="107"/>
    </location>
</feature>
<feature type="domain" description="2Fe-2S ferredoxin-type" evidence="1">
    <location>
        <begin position="3"/>
        <end position="106"/>
    </location>
</feature>
<feature type="binding site" evidence="1">
    <location>
        <position position="41"/>
    </location>
    <ligand>
        <name>[2Fe-2S] cluster</name>
        <dbReference type="ChEBI" id="CHEBI:190135"/>
    </ligand>
</feature>
<feature type="binding site" evidence="1">
    <location>
        <position position="47"/>
    </location>
    <ligand>
        <name>[2Fe-2S] cluster</name>
        <dbReference type="ChEBI" id="CHEBI:190135"/>
    </ligand>
</feature>
<feature type="binding site" evidence="1">
    <location>
        <position position="50"/>
    </location>
    <ligand>
        <name>[2Fe-2S] cluster</name>
        <dbReference type="ChEBI" id="CHEBI:190135"/>
    </ligand>
</feature>
<feature type="binding site" evidence="1">
    <location>
        <position position="87"/>
    </location>
    <ligand>
        <name>[2Fe-2S] cluster</name>
        <dbReference type="ChEBI" id="CHEBI:190135"/>
    </ligand>
</feature>
<name>CTME_CASD6</name>
<keyword id="KW-0001">2Fe-2S</keyword>
<keyword id="KW-0249">Electron transport</keyword>
<keyword id="KW-0408">Iron</keyword>
<keyword id="KW-0411">Iron-sulfur</keyword>
<keyword id="KW-0479">Metal-binding</keyword>
<keyword id="KW-1185">Reference proteome</keyword>
<keyword id="KW-0813">Transport</keyword>
<comment type="function">
    <text evidence="2 5">Involved in the degradation of the cyclic monoterpene limonene (PubMed:24952578). Probably part of an electron transfer system involved in the oxidation of limonene to perillyl alcohol (Probable).</text>
</comment>
<comment type="cofactor">
    <cofactor evidence="1">
        <name>[2Fe-2S] cluster</name>
        <dbReference type="ChEBI" id="CHEBI:190135"/>
    </cofactor>
    <text evidence="1">Binds 1 2Fe-2S cluster.</text>
</comment>
<comment type="pathway">
    <text evidence="2">Terpene metabolism; monoterpene degradation.</text>
</comment>
<comment type="induction">
    <text evidence="2">By the monoterpene alpha-phellandrene, but not by acetate.</text>
</comment>
<comment type="disruption phenotype">
    <text evidence="2">Mutant cannot not grow aerobically or anaerobically on limonene, but it can grow on perillyl alcohol or on acetate.</text>
</comment>
<comment type="similarity">
    <text evidence="4">Belongs to the adrenodoxin/putidaredoxin family.</text>
</comment>
<organism>
    <name type="scientific">Castellaniella defragrans (strain DSM 12143 / CCUG 39792 / 65Phen)</name>
    <name type="common">Alcaligenes defragrans</name>
    <dbReference type="NCBI Taxonomy" id="1437824"/>
    <lineage>
        <taxon>Bacteria</taxon>
        <taxon>Pseudomonadati</taxon>
        <taxon>Pseudomonadota</taxon>
        <taxon>Betaproteobacteria</taxon>
        <taxon>Burkholderiales</taxon>
        <taxon>Alcaligenaceae</taxon>
        <taxon>Castellaniella</taxon>
    </lineage>
</organism>
<gene>
    <name evidence="3" type="primary">ctmE</name>
    <name evidence="6" type="ORF">BN940_14206</name>
</gene>
<protein>
    <recommendedName>
        <fullName evidence="4">2Fe-2S ferredoxin CtmE</fullName>
    </recommendedName>
</protein>
<dbReference type="EMBL" id="HG916765">
    <property type="protein sequence ID" value="CDM25286.1"/>
    <property type="molecule type" value="Genomic_DNA"/>
</dbReference>
<dbReference type="RefSeq" id="WP_242404200.1">
    <property type="nucleotide sequence ID" value="NZ_HG916765.1"/>
</dbReference>
<dbReference type="SMR" id="W8X5L3"/>
<dbReference type="STRING" id="1437824.BN940_14206"/>
<dbReference type="KEGG" id="cdn:BN940_14206"/>
<dbReference type="PATRIC" id="fig|1437824.5.peg.2805"/>
<dbReference type="eggNOG" id="COG0633">
    <property type="taxonomic scope" value="Bacteria"/>
</dbReference>
<dbReference type="HOGENOM" id="CLU_082632_5_1_4"/>
<dbReference type="UniPathway" id="UPA00137"/>
<dbReference type="Proteomes" id="UP000019805">
    <property type="component" value="Chromosome"/>
</dbReference>
<dbReference type="GO" id="GO:0051537">
    <property type="term" value="F:2 iron, 2 sulfur cluster binding"/>
    <property type="evidence" value="ECO:0007669"/>
    <property type="project" value="UniProtKB-KW"/>
</dbReference>
<dbReference type="GO" id="GO:0009055">
    <property type="term" value="F:electron transfer activity"/>
    <property type="evidence" value="ECO:0007669"/>
    <property type="project" value="TreeGrafter"/>
</dbReference>
<dbReference type="GO" id="GO:0046872">
    <property type="term" value="F:metal ion binding"/>
    <property type="evidence" value="ECO:0007669"/>
    <property type="project" value="UniProtKB-KW"/>
</dbReference>
<dbReference type="GO" id="GO:0140647">
    <property type="term" value="P:P450-containing electron transport chain"/>
    <property type="evidence" value="ECO:0007669"/>
    <property type="project" value="InterPro"/>
</dbReference>
<dbReference type="CDD" id="cd00207">
    <property type="entry name" value="fer2"/>
    <property type="match status" value="1"/>
</dbReference>
<dbReference type="Gene3D" id="3.10.20.30">
    <property type="match status" value="1"/>
</dbReference>
<dbReference type="InterPro" id="IPR036010">
    <property type="entry name" value="2Fe-2S_ferredoxin-like_sf"/>
</dbReference>
<dbReference type="InterPro" id="IPR001041">
    <property type="entry name" value="2Fe-2S_ferredoxin-type"/>
</dbReference>
<dbReference type="InterPro" id="IPR001055">
    <property type="entry name" value="Adrenodoxin-like"/>
</dbReference>
<dbReference type="InterPro" id="IPR012675">
    <property type="entry name" value="Beta-grasp_dom_sf"/>
</dbReference>
<dbReference type="PANTHER" id="PTHR23426:SF65">
    <property type="entry name" value="FERREDOXIN-2, MITOCHONDRIAL"/>
    <property type="match status" value="1"/>
</dbReference>
<dbReference type="PANTHER" id="PTHR23426">
    <property type="entry name" value="FERREDOXIN/ADRENODOXIN"/>
    <property type="match status" value="1"/>
</dbReference>
<dbReference type="Pfam" id="PF00111">
    <property type="entry name" value="Fer2"/>
    <property type="match status" value="1"/>
</dbReference>
<dbReference type="PRINTS" id="PR00355">
    <property type="entry name" value="ADRENODOXIN"/>
</dbReference>
<dbReference type="SUPFAM" id="SSF54292">
    <property type="entry name" value="2Fe-2S ferredoxin-like"/>
    <property type="match status" value="1"/>
</dbReference>
<dbReference type="PROSITE" id="PS51085">
    <property type="entry name" value="2FE2S_FER_2"/>
    <property type="match status" value="1"/>
</dbReference>